<feature type="initiator methionine" description="Removed" evidence="1">
    <location>
        <position position="1"/>
    </location>
</feature>
<feature type="chain" id="PRO_0000139825" description="Large ribosomal subunit protein eL43">
    <location>
        <begin position="2"/>
        <end position="91"/>
    </location>
</feature>
<feature type="zinc finger region" description="C4-type">
    <location>
        <begin position="39"/>
        <end position="60"/>
    </location>
</feature>
<proteinExistence type="evidence at protein level"/>
<evidence type="ECO:0000250" key="1"/>
<evidence type="ECO:0000305" key="2"/>
<evidence type="ECO:0000312" key="3">
    <source>
        <dbReference type="WormBase" id="Y48B6A.2"/>
    </source>
</evidence>
<reference key="1">
    <citation type="journal article" date="1998" name="Science">
        <title>Genome sequence of the nematode C. elegans: a platform for investigating biology.</title>
        <authorList>
            <consortium name="The C. elegans sequencing consortium"/>
        </authorList>
    </citation>
    <scope>NUCLEOTIDE SEQUENCE [LARGE SCALE GENOMIC DNA]</scope>
    <source>
        <strain>Bristol N2</strain>
    </source>
</reference>
<keyword id="KW-0002">3D-structure</keyword>
<keyword id="KW-0479">Metal-binding</keyword>
<keyword id="KW-1185">Reference proteome</keyword>
<keyword id="KW-0687">Ribonucleoprotein</keyword>
<keyword id="KW-0689">Ribosomal protein</keyword>
<keyword id="KW-0862">Zinc</keyword>
<keyword id="KW-0863">Zinc-finger</keyword>
<organism>
    <name type="scientific">Caenorhabditis elegans</name>
    <dbReference type="NCBI Taxonomy" id="6239"/>
    <lineage>
        <taxon>Eukaryota</taxon>
        <taxon>Metazoa</taxon>
        <taxon>Ecdysozoa</taxon>
        <taxon>Nematoda</taxon>
        <taxon>Chromadorea</taxon>
        <taxon>Rhabditida</taxon>
        <taxon>Rhabditina</taxon>
        <taxon>Rhabditomorpha</taxon>
        <taxon>Rhabditoidea</taxon>
        <taxon>Rhabditidae</taxon>
        <taxon>Peloderinae</taxon>
        <taxon>Caenorhabditis</taxon>
    </lineage>
</organism>
<gene>
    <name evidence="3" type="primary">rpl-37A</name>
    <name evidence="3" type="synonym">rpl-43</name>
    <name evidence="3" type="ORF">Y48B6A.2</name>
</gene>
<dbReference type="EMBL" id="AL110490">
    <property type="protein sequence ID" value="CAB54440.1"/>
    <property type="molecule type" value="Genomic_DNA"/>
</dbReference>
<dbReference type="PIR" id="T26996">
    <property type="entry name" value="T26996"/>
</dbReference>
<dbReference type="RefSeq" id="NP_496957.1">
    <property type="nucleotide sequence ID" value="NM_064556.7"/>
</dbReference>
<dbReference type="PDB" id="9BH5">
    <property type="method" value="EM"/>
    <property type="resolution" value="2.63 A"/>
    <property type="chains" value="Cp=1-91"/>
</dbReference>
<dbReference type="PDB" id="9CAI">
    <property type="method" value="EM"/>
    <property type="resolution" value="2.59 A"/>
    <property type="chains" value="Cp=1-91"/>
</dbReference>
<dbReference type="PDBsum" id="9BH5"/>
<dbReference type="PDBsum" id="9CAI"/>
<dbReference type="EMDB" id="EMD-44533"/>
<dbReference type="EMDB" id="EMD-45392"/>
<dbReference type="SMR" id="Q9U2A8"/>
<dbReference type="BioGRID" id="40352">
    <property type="interactions" value="82"/>
</dbReference>
<dbReference type="DIP" id="DIP-27124N"/>
<dbReference type="FunCoup" id="Q9U2A8">
    <property type="interactions" value="1241"/>
</dbReference>
<dbReference type="STRING" id="6239.Y48B6A.2.3"/>
<dbReference type="PaxDb" id="6239-Y48B6A.2.1"/>
<dbReference type="PeptideAtlas" id="Q9U2A8"/>
<dbReference type="EnsemblMetazoa" id="Y48B6A.2.1">
    <property type="protein sequence ID" value="Y48B6A.2.1"/>
    <property type="gene ID" value="WBGene00004456"/>
</dbReference>
<dbReference type="GeneID" id="175070"/>
<dbReference type="KEGG" id="cel:CELE_Y48B6A.2"/>
<dbReference type="UCSC" id="Y48B6A.2.1">
    <property type="organism name" value="c. elegans"/>
</dbReference>
<dbReference type="AGR" id="WB:WBGene00004456"/>
<dbReference type="CTD" id="175070"/>
<dbReference type="WormBase" id="Y48B6A.2">
    <property type="protein sequence ID" value="CE22117"/>
    <property type="gene ID" value="WBGene00004456"/>
    <property type="gene designation" value="rpl-37A"/>
</dbReference>
<dbReference type="eggNOG" id="KOG0402">
    <property type="taxonomic scope" value="Eukaryota"/>
</dbReference>
<dbReference type="GeneTree" id="ENSGT00940000167978"/>
<dbReference type="HOGENOM" id="CLU_141199_1_0_1"/>
<dbReference type="InParanoid" id="Q9U2A8"/>
<dbReference type="OMA" id="EAMKRTC"/>
<dbReference type="OrthoDB" id="10258345at2759"/>
<dbReference type="PhylomeDB" id="Q9U2A8"/>
<dbReference type="Reactome" id="R-CEL-156827">
    <property type="pathway name" value="L13a-mediated translational silencing of Ceruloplasmin expression"/>
</dbReference>
<dbReference type="Reactome" id="R-CEL-1799339">
    <property type="pathway name" value="SRP-dependent cotranslational protein targeting to membrane"/>
</dbReference>
<dbReference type="Reactome" id="R-CEL-72689">
    <property type="pathway name" value="Formation of a pool of free 40S subunits"/>
</dbReference>
<dbReference type="Reactome" id="R-CEL-72706">
    <property type="pathway name" value="GTP hydrolysis and joining of the 60S ribosomal subunit"/>
</dbReference>
<dbReference type="Reactome" id="R-CEL-975956">
    <property type="pathway name" value="Nonsense Mediated Decay (NMD) independent of the Exon Junction Complex (EJC)"/>
</dbReference>
<dbReference type="Reactome" id="R-CEL-975957">
    <property type="pathway name" value="Nonsense Mediated Decay (NMD) enhanced by the Exon Junction Complex (EJC)"/>
</dbReference>
<dbReference type="PRO" id="PR:Q9U2A8"/>
<dbReference type="Proteomes" id="UP000001940">
    <property type="component" value="Chromosome II"/>
</dbReference>
<dbReference type="Bgee" id="WBGene00004456">
    <property type="expression patterns" value="Expressed in germ line (C elegans) and 4 other cell types or tissues"/>
</dbReference>
<dbReference type="GO" id="GO:0022625">
    <property type="term" value="C:cytosolic large ribosomal subunit"/>
    <property type="evidence" value="ECO:0000318"/>
    <property type="project" value="GO_Central"/>
</dbReference>
<dbReference type="GO" id="GO:0003735">
    <property type="term" value="F:structural constituent of ribosome"/>
    <property type="evidence" value="ECO:0007669"/>
    <property type="project" value="InterPro"/>
</dbReference>
<dbReference type="GO" id="GO:0008270">
    <property type="term" value="F:zinc ion binding"/>
    <property type="evidence" value="ECO:0007669"/>
    <property type="project" value="UniProtKB-KW"/>
</dbReference>
<dbReference type="GO" id="GO:0006412">
    <property type="term" value="P:translation"/>
    <property type="evidence" value="ECO:0007669"/>
    <property type="project" value="InterPro"/>
</dbReference>
<dbReference type="FunFam" id="2.20.25.30:FF:000002">
    <property type="entry name" value="60S ribosomal protein L37a"/>
    <property type="match status" value="1"/>
</dbReference>
<dbReference type="Gene3D" id="2.20.25.30">
    <property type="match status" value="1"/>
</dbReference>
<dbReference type="HAMAP" id="MF_00327">
    <property type="entry name" value="Ribosomal_eL43"/>
    <property type="match status" value="1"/>
</dbReference>
<dbReference type="InterPro" id="IPR011331">
    <property type="entry name" value="Ribosomal_eL37/eL43"/>
</dbReference>
<dbReference type="InterPro" id="IPR002674">
    <property type="entry name" value="Ribosomal_eL43"/>
</dbReference>
<dbReference type="InterPro" id="IPR011332">
    <property type="entry name" value="Ribosomal_zn-bd"/>
</dbReference>
<dbReference type="NCBIfam" id="TIGR00280">
    <property type="entry name" value="eL43_euk_arch"/>
    <property type="match status" value="1"/>
</dbReference>
<dbReference type="NCBIfam" id="NF003058">
    <property type="entry name" value="PRK03976.1"/>
    <property type="match status" value="1"/>
</dbReference>
<dbReference type="PANTHER" id="PTHR48160">
    <property type="entry name" value="LARGE RIBOSOMAL SUBUNIT PROTEIN EL43"/>
    <property type="match status" value="1"/>
</dbReference>
<dbReference type="PANTHER" id="PTHR48160:SF1">
    <property type="entry name" value="LARGE RIBOSOMAL SUBUNIT PROTEIN EL43"/>
    <property type="match status" value="1"/>
</dbReference>
<dbReference type="Pfam" id="PF01780">
    <property type="entry name" value="Ribosomal_L37ae"/>
    <property type="match status" value="1"/>
</dbReference>
<dbReference type="SUPFAM" id="SSF57829">
    <property type="entry name" value="Zn-binding ribosomal proteins"/>
    <property type="match status" value="1"/>
</dbReference>
<accession>Q9U2A8</accession>
<comment type="similarity">
    <text evidence="2">Belongs to the eukaryotic ribosomal protein eL43 family.</text>
</comment>
<protein>
    <recommendedName>
        <fullName evidence="2">Large ribosomal subunit protein eL43</fullName>
    </recommendedName>
    <alternativeName>
        <fullName>60S ribosomal protein L37a</fullName>
    </alternativeName>
</protein>
<name>RL37A_CAEEL</name>
<sequence length="91" mass="10102">MAKRTKKVGIVGKYGTRYGASLRKMAKKLEVAQHSRYTCSFCGKEAMKRKATGIWNCAKCHKVVAGGAYVYGTVTAATVRSTIRRLRDLKE</sequence>